<feature type="transit peptide" description="Mitochondrion" evidence="3">
    <location>
        <begin position="1"/>
        <end position="42"/>
    </location>
</feature>
<feature type="chain" id="PRO_0000270511" description="Transcription factor A, mitochondrial">
    <location>
        <begin position="43"/>
        <end position="246"/>
    </location>
</feature>
<feature type="DNA-binding region" description="HMG box 1" evidence="4">
    <location>
        <begin position="50"/>
        <end position="118"/>
    </location>
</feature>
<feature type="DNA-binding region" description="HMG box 2" evidence="4">
    <location>
        <begin position="155"/>
        <end position="219"/>
    </location>
</feature>
<feature type="site" description="Intercalates between bases and promotes DNA bending" evidence="1">
    <location>
        <position position="58"/>
    </location>
</feature>
<feature type="site" description="Intercalates between bases and promotes DNA bending" evidence="1">
    <location>
        <position position="182"/>
    </location>
</feature>
<feature type="modified residue" description="Phosphoserine; by PKA" evidence="2">
    <location>
        <position position="56"/>
    </location>
</feature>
<feature type="modified residue" description="Phosphoserine; by PKA" evidence="2">
    <location>
        <position position="61"/>
    </location>
</feature>
<feature type="modified residue" description="Phosphothreonine" evidence="2">
    <location>
        <position position="122"/>
    </location>
</feature>
<feature type="modified residue" description="Phosphoserine; by PKA" evidence="2">
    <location>
        <position position="160"/>
    </location>
</feature>
<feature type="modified residue" description="Phosphoserine" evidence="2">
    <location>
        <position position="193"/>
    </location>
</feature>
<feature type="modified residue" description="Phosphoserine" evidence="2">
    <location>
        <position position="195"/>
    </location>
</feature>
<dbReference type="EMBL" id="BC122754">
    <property type="protein sequence ID" value="AAI22755.1"/>
    <property type="molecule type" value="mRNA"/>
</dbReference>
<dbReference type="RefSeq" id="NP_001029188.2">
    <property type="nucleotide sequence ID" value="NM_001034016.2"/>
</dbReference>
<dbReference type="SMR" id="Q0II87"/>
<dbReference type="FunCoup" id="Q0II87">
    <property type="interactions" value="3133"/>
</dbReference>
<dbReference type="STRING" id="9913.ENSBTAP00000052192"/>
<dbReference type="PaxDb" id="9913-ENSBTAP00000052192"/>
<dbReference type="GeneID" id="510059"/>
<dbReference type="KEGG" id="bta:510059"/>
<dbReference type="CTD" id="7019"/>
<dbReference type="eggNOG" id="KOG0381">
    <property type="taxonomic scope" value="Eukaryota"/>
</dbReference>
<dbReference type="InParanoid" id="Q0II87"/>
<dbReference type="OrthoDB" id="5550281at2759"/>
<dbReference type="Proteomes" id="UP000009136">
    <property type="component" value="Unplaced"/>
</dbReference>
<dbReference type="GO" id="GO:0042645">
    <property type="term" value="C:mitochondrial nucleoid"/>
    <property type="evidence" value="ECO:0000250"/>
    <property type="project" value="UniProtKB"/>
</dbReference>
<dbReference type="GO" id="GO:0003682">
    <property type="term" value="F:chromatin binding"/>
    <property type="evidence" value="ECO:0000250"/>
    <property type="project" value="UniProtKB"/>
</dbReference>
<dbReference type="GO" id="GO:0008301">
    <property type="term" value="F:DNA binding, bending"/>
    <property type="evidence" value="ECO:0000318"/>
    <property type="project" value="GO_Central"/>
</dbReference>
<dbReference type="GO" id="GO:0001018">
    <property type="term" value="F:mitochondrial promoter sequence-specific DNA binding"/>
    <property type="evidence" value="ECO:0000250"/>
    <property type="project" value="UniProtKB"/>
</dbReference>
<dbReference type="GO" id="GO:0034246">
    <property type="term" value="F:mitochondrial transcription factor activity"/>
    <property type="evidence" value="ECO:0000250"/>
    <property type="project" value="UniProtKB"/>
</dbReference>
<dbReference type="GO" id="GO:0000976">
    <property type="term" value="F:transcription cis-regulatory region binding"/>
    <property type="evidence" value="ECO:0000318"/>
    <property type="project" value="GO_Central"/>
</dbReference>
<dbReference type="GO" id="GO:0006390">
    <property type="term" value="P:mitochondrial transcription"/>
    <property type="evidence" value="ECO:0000250"/>
    <property type="project" value="UniProtKB"/>
</dbReference>
<dbReference type="GO" id="GO:0045893">
    <property type="term" value="P:positive regulation of DNA-templated transcription"/>
    <property type="evidence" value="ECO:0000250"/>
    <property type="project" value="UniProtKB"/>
</dbReference>
<dbReference type="GO" id="GO:0006357">
    <property type="term" value="P:regulation of transcription by RNA polymerase II"/>
    <property type="evidence" value="ECO:0000318"/>
    <property type="project" value="GO_Central"/>
</dbReference>
<dbReference type="GO" id="GO:0006391">
    <property type="term" value="P:transcription initiation at mitochondrial promoter"/>
    <property type="evidence" value="ECO:0000250"/>
    <property type="project" value="UniProtKB"/>
</dbReference>
<dbReference type="CDD" id="cd21987">
    <property type="entry name" value="HMG-box_TFAM_rpt2"/>
    <property type="match status" value="1"/>
</dbReference>
<dbReference type="FunFam" id="1.10.30.10:FF:000043">
    <property type="entry name" value="Transcription factor A, mitochondrial"/>
    <property type="match status" value="1"/>
</dbReference>
<dbReference type="FunFam" id="1.10.30.10:FF:000045">
    <property type="entry name" value="Transcription factor A, mitochondrial"/>
    <property type="match status" value="1"/>
</dbReference>
<dbReference type="Gene3D" id="1.10.30.10">
    <property type="entry name" value="High mobility group box domain"/>
    <property type="match status" value="2"/>
</dbReference>
<dbReference type="InterPro" id="IPR009071">
    <property type="entry name" value="HMG_box_dom"/>
</dbReference>
<dbReference type="InterPro" id="IPR036910">
    <property type="entry name" value="HMG_box_dom_sf"/>
</dbReference>
<dbReference type="InterPro" id="IPR050342">
    <property type="entry name" value="HMGB"/>
</dbReference>
<dbReference type="PANTHER" id="PTHR48112">
    <property type="entry name" value="HIGH MOBILITY GROUP PROTEIN DSP1"/>
    <property type="match status" value="1"/>
</dbReference>
<dbReference type="PANTHER" id="PTHR48112:SF36">
    <property type="entry name" value="TRANSCRIPTION FACTOR A, MITOCHONDRIAL"/>
    <property type="match status" value="1"/>
</dbReference>
<dbReference type="Pfam" id="PF00505">
    <property type="entry name" value="HMG_box"/>
    <property type="match status" value="1"/>
</dbReference>
<dbReference type="Pfam" id="PF09011">
    <property type="entry name" value="HMG_box_2"/>
    <property type="match status" value="1"/>
</dbReference>
<dbReference type="SMART" id="SM00398">
    <property type="entry name" value="HMG"/>
    <property type="match status" value="2"/>
</dbReference>
<dbReference type="SUPFAM" id="SSF47095">
    <property type="entry name" value="HMG-box"/>
    <property type="match status" value="2"/>
</dbReference>
<dbReference type="PROSITE" id="PS50118">
    <property type="entry name" value="HMG_BOX_2"/>
    <property type="match status" value="2"/>
</dbReference>
<proteinExistence type="evidence at transcript level"/>
<sequence length="246" mass="28907">MALLRGVWGVLNALGKSGADLCAGCGSRLRYPFSFAYVPKWFSSSLSGYPKKPMTSYVRFSKEQLPIFKAQNPDAKNSELIKKIAKLWRELPDSEKKIYEDAYRADWQVYKEEINRIQEQLTPSQMVSLEKEIMQKRLKKKALIKKRELTMLGKPKRPRSAYNIFIAERFQEARDGTSQVKLKAINENWKNLSNSQKQVYIQLAKDDKIRYYNEMKSWEEQMMEVGREDLIRRSIKYPAKNDPEKF</sequence>
<name>TFAM_BOVIN</name>
<protein>
    <recommendedName>
        <fullName evidence="2">Transcription factor A, mitochondrial</fullName>
        <shortName>mtTFA</shortName>
    </recommendedName>
</protein>
<evidence type="ECO:0000250" key="1"/>
<evidence type="ECO:0000250" key="2">
    <source>
        <dbReference type="UniProtKB" id="Q00059"/>
    </source>
</evidence>
<evidence type="ECO:0000255" key="3"/>
<evidence type="ECO:0000255" key="4">
    <source>
        <dbReference type="PROSITE-ProRule" id="PRU00267"/>
    </source>
</evidence>
<organism>
    <name type="scientific">Bos taurus</name>
    <name type="common">Bovine</name>
    <dbReference type="NCBI Taxonomy" id="9913"/>
    <lineage>
        <taxon>Eukaryota</taxon>
        <taxon>Metazoa</taxon>
        <taxon>Chordata</taxon>
        <taxon>Craniata</taxon>
        <taxon>Vertebrata</taxon>
        <taxon>Euteleostomi</taxon>
        <taxon>Mammalia</taxon>
        <taxon>Eutheria</taxon>
        <taxon>Laurasiatheria</taxon>
        <taxon>Artiodactyla</taxon>
        <taxon>Ruminantia</taxon>
        <taxon>Pecora</taxon>
        <taxon>Bovidae</taxon>
        <taxon>Bovinae</taxon>
        <taxon>Bos</taxon>
    </lineage>
</organism>
<accession>Q0II87</accession>
<keyword id="KW-0010">Activator</keyword>
<keyword id="KW-0238">DNA-binding</keyword>
<keyword id="KW-0496">Mitochondrion</keyword>
<keyword id="KW-1135">Mitochondrion nucleoid</keyword>
<keyword id="KW-0597">Phosphoprotein</keyword>
<keyword id="KW-1185">Reference proteome</keyword>
<keyword id="KW-0677">Repeat</keyword>
<keyword id="KW-0804">Transcription</keyword>
<keyword id="KW-0805">Transcription regulation</keyword>
<keyword id="KW-0809">Transit peptide</keyword>
<comment type="function">
    <text evidence="2">Binds to the mitochondrial light strand promoter and functions in mitochondrial transcription regulation. Component of the mitochondrial transcription initiation complex, composed at least of TFB2M, TFAM and POLRMT that is required for basal transcription of mitochondrial DNA. In this complex, TFAM recruits POLRMT to a specific promoter whereas TFB2M induces structural changes in POLRMT to enable promoter opening and trapping of the DNA non-template strand. Required for accurate and efficient promoter recognition by the mitochondrial RNA polymerase. Promotes transcription initiation from the HSP1 and the light strand promoter by binding immediately upstream of transcriptional start sites. Is able to unwind DNA. Bends the mitochondrial light strand promoter DNA into a U-turn shape via its HMG boxes. Required for maintenance of normal levels of mitochondrial DNA. May play a role in organizing and compacting mitochondrial DNA.</text>
</comment>
<comment type="subunit">
    <text evidence="2">Monomer; binds DNA as a monomer. Homodimer. Component of the mitochondrial transcription initiation complex, composed at least of TFB2M, TFAM and POLRMT. In this complex TFAM recruits POLRMT to the promoter whereas TFB2M induces structural changes in POLRMT to enable promoter opening and trapping of the DNA non-template strand. Upon metabolic stress, forms a complex composed of FOXO3, SIRT3, TFAM and POLRMT. Interacts with TFB1M and TFB2M. Interacts with CLPX; this enhances DNA-binding.</text>
</comment>
<comment type="subcellular location">
    <subcellularLocation>
        <location evidence="1">Mitochondrion</location>
    </subcellularLocation>
    <subcellularLocation>
        <location evidence="1">Mitochondrion matrix</location>
        <location evidence="1">Mitochondrion nucleoid</location>
    </subcellularLocation>
</comment>
<comment type="domain">
    <text evidence="1">Binds DNA via its HMG boxes. When bound to the mitochondrial light strand promoter, bends DNA into a U-turn shape, each HMG box bending the DNA by 90 degrees (By similarity).</text>
</comment>
<comment type="PTM">
    <text evidence="1">Phosphorylation by PKA within the HMG box 1 impairs DNA binding and promotes degradation by the AAA+ Lon protease.</text>
</comment>
<gene>
    <name evidence="2" type="primary">TFAM</name>
</gene>
<reference key="1">
    <citation type="submission" date="2006-08" db="EMBL/GenBank/DDBJ databases">
        <authorList>
            <consortium name="NIH - Mammalian Gene Collection (MGC) project"/>
        </authorList>
    </citation>
    <scope>NUCLEOTIDE SEQUENCE [LARGE SCALE MRNA]</scope>
    <source>
        <strain>Crossbred X Angus</strain>
        <tissue>Liver</tissue>
    </source>
</reference>